<evidence type="ECO:0000305" key="1"/>
<organismHost>
    <name type="scientific">Homo sapiens</name>
    <name type="common">Human</name>
    <dbReference type="NCBI Taxonomy" id="9606"/>
</organismHost>
<protein>
    <recommendedName>
        <fullName>Protein U63</fullName>
    </recommendedName>
</protein>
<comment type="similarity">
    <text evidence="1">Belongs to the herpesviridae UL92 family.</text>
</comment>
<proteinExistence type="inferred from homology"/>
<reference key="1">
    <citation type="journal article" date="1999" name="J. Virol.">
        <title>Human herpesvirus 6B genome sequence: coding content and comparison with human herpesvirus 6A.</title>
        <authorList>
            <person name="Dominguez G."/>
            <person name="Dambaugh T.R."/>
            <person name="Stamey F.R."/>
            <person name="Dewhurst S."/>
            <person name="Inoue N."/>
            <person name="Pellett P.E."/>
        </authorList>
    </citation>
    <scope>NUCLEOTIDE SEQUENCE [LARGE SCALE GENOMIC DNA]</scope>
</reference>
<organism>
    <name type="scientific">Human herpesvirus 6B (strain Z29)</name>
    <name type="common">HHV-6 variant B</name>
    <name type="synonym">Human B lymphotropic virus</name>
    <dbReference type="NCBI Taxonomy" id="36351"/>
    <lineage>
        <taxon>Viruses</taxon>
        <taxon>Duplodnaviria</taxon>
        <taxon>Heunggongvirae</taxon>
        <taxon>Peploviricota</taxon>
        <taxon>Herviviricetes</taxon>
        <taxon>Herpesvirales</taxon>
        <taxon>Orthoherpesviridae</taxon>
        <taxon>Betaherpesvirinae</taxon>
        <taxon>Roseolovirus</taxon>
        <taxon>Roseolovirus humanbeta6b</taxon>
        <taxon>Human herpesvirus 6B</taxon>
    </lineage>
</organism>
<dbReference type="EMBL" id="AF157706">
    <property type="protein sequence ID" value="AAD49664.1"/>
    <property type="molecule type" value="Genomic_DNA"/>
</dbReference>
<dbReference type="RefSeq" id="NP_050243.1">
    <property type="nucleotide sequence ID" value="NC_000898.1"/>
</dbReference>
<dbReference type="DNASU" id="1497063"/>
<dbReference type="GeneID" id="1497063"/>
<dbReference type="KEGG" id="vg:1497063"/>
<dbReference type="Proteomes" id="UP000006930">
    <property type="component" value="Segment"/>
</dbReference>
<dbReference type="InterPro" id="IPR004289">
    <property type="entry name" value="Herpes_UL92"/>
</dbReference>
<dbReference type="Pfam" id="PF03048">
    <property type="entry name" value="Herpes_UL92"/>
    <property type="match status" value="1"/>
</dbReference>
<accession>Q9QJ21</accession>
<sequence>MEMALPRKYDRVTGRILTHKNNQMCTTECSQMYNLHNPITFELGLGNVFVCMRCLTVHHCDMQTDCTIVNTHEGYVCAKTGLFYSGWMPTYADCFLEPICEPNIETVNVVVVLLSYVYSFLMENKERYAAIIDSIIKDGKFIKNVEDAVFYTFNAVFTNSTFNKIPLTTISRLFVQLIIGGHAKGTIYDSNVIRVSRRKREDSLLKKMRLEYGNALIL</sequence>
<keyword id="KW-1185">Reference proteome</keyword>
<name>UL92_HHV6Z</name>
<feature type="chain" id="PRO_0000408442" description="Protein U63">
    <location>
        <begin position="1"/>
        <end position="218"/>
    </location>
</feature>
<gene>
    <name type="primary">U63</name>
</gene>